<name>VTI1_SCHPO</name>
<keyword id="KW-0175">Coiled coil</keyword>
<keyword id="KW-0472">Membrane</keyword>
<keyword id="KW-0653">Protein transport</keyword>
<keyword id="KW-1185">Reference proteome</keyword>
<keyword id="KW-0812">Transmembrane</keyword>
<keyword id="KW-1133">Transmembrane helix</keyword>
<keyword id="KW-0813">Transport</keyword>
<sequence length="214" mass="24743">METYEQEYRLLRADIEEKLNDLSKSGENSVIQSCQRLLNEIDEVIGQMEIEITGIPTSERGLVNGRIRSYRSTLEEWRRHLKEEIGKSDRKALFGNRDETSGDYIASDQDYDQRTRLLQGTNRLEQSSQRLLESQRIANETEGIGASILRDLHGQRNQLEHSLEMLGDTSGHLDRSLRTLKTMARRLAMNRFFTTAIIAILVILILLVLYSKFR</sequence>
<organism>
    <name type="scientific">Schizosaccharomyces pombe (strain 972 / ATCC 24843)</name>
    <name type="common">Fission yeast</name>
    <dbReference type="NCBI Taxonomy" id="284812"/>
    <lineage>
        <taxon>Eukaryota</taxon>
        <taxon>Fungi</taxon>
        <taxon>Dikarya</taxon>
        <taxon>Ascomycota</taxon>
        <taxon>Taphrinomycotina</taxon>
        <taxon>Schizosaccharomycetes</taxon>
        <taxon>Schizosaccharomycetales</taxon>
        <taxon>Schizosaccharomycetaceae</taxon>
        <taxon>Schizosaccharomyces</taxon>
    </lineage>
</organism>
<dbReference type="EMBL" id="D89116">
    <property type="protein sequence ID" value="BAA13778.1"/>
    <property type="molecule type" value="mRNA"/>
</dbReference>
<dbReference type="EMBL" id="CU329671">
    <property type="protein sequence ID" value="CAA17790.1"/>
    <property type="molecule type" value="Genomic_DNA"/>
</dbReference>
<dbReference type="PIR" id="T40349">
    <property type="entry name" value="T40349"/>
</dbReference>
<dbReference type="PIR" id="T42225">
    <property type="entry name" value="T42225"/>
</dbReference>
<dbReference type="RefSeq" id="NP_596668.1">
    <property type="nucleotide sequence ID" value="NM_001022590.2"/>
</dbReference>
<dbReference type="SMR" id="P78768"/>
<dbReference type="BioGRID" id="277486">
    <property type="interactions" value="3"/>
</dbReference>
<dbReference type="FunCoup" id="P78768">
    <property type="interactions" value="534"/>
</dbReference>
<dbReference type="STRING" id="284812.P78768"/>
<dbReference type="iPTMnet" id="P78768"/>
<dbReference type="PaxDb" id="4896-SPBC3B9.10.1"/>
<dbReference type="EnsemblFungi" id="SPBC3B9.10.1">
    <property type="protein sequence ID" value="SPBC3B9.10.1:pep"/>
    <property type="gene ID" value="SPBC3B9.10"/>
</dbReference>
<dbReference type="GeneID" id="2540970"/>
<dbReference type="KEGG" id="spo:2540970"/>
<dbReference type="PomBase" id="SPBC3B9.10">
    <property type="gene designation" value="vti1"/>
</dbReference>
<dbReference type="VEuPathDB" id="FungiDB:SPBC3B9.10"/>
<dbReference type="eggNOG" id="KOG1666">
    <property type="taxonomic scope" value="Eukaryota"/>
</dbReference>
<dbReference type="HOGENOM" id="CLU_075474_0_1_1"/>
<dbReference type="InParanoid" id="P78768"/>
<dbReference type="OMA" id="MEYEAND"/>
<dbReference type="PhylomeDB" id="P78768"/>
<dbReference type="Reactome" id="R-SPO-114608">
    <property type="pathway name" value="Platelet degranulation"/>
</dbReference>
<dbReference type="Reactome" id="R-SPO-6811440">
    <property type="pathway name" value="Retrograde transport at the Trans-Golgi-Network"/>
</dbReference>
<dbReference type="PRO" id="PR:P78768"/>
<dbReference type="Proteomes" id="UP000002485">
    <property type="component" value="Chromosome II"/>
</dbReference>
<dbReference type="GO" id="GO:0005737">
    <property type="term" value="C:cytoplasm"/>
    <property type="evidence" value="ECO:0007005"/>
    <property type="project" value="PomBase"/>
</dbReference>
<dbReference type="GO" id="GO:0005829">
    <property type="term" value="C:cytosol"/>
    <property type="evidence" value="ECO:0007669"/>
    <property type="project" value="GOC"/>
</dbReference>
<dbReference type="GO" id="GO:0005789">
    <property type="term" value="C:endoplasmic reticulum membrane"/>
    <property type="evidence" value="ECO:0000318"/>
    <property type="project" value="GO_Central"/>
</dbReference>
<dbReference type="GO" id="GO:0012507">
    <property type="term" value="C:ER to Golgi transport vesicle membrane"/>
    <property type="evidence" value="ECO:0000318"/>
    <property type="project" value="GO_Central"/>
</dbReference>
<dbReference type="GO" id="GO:0000324">
    <property type="term" value="C:fungal-type vacuole"/>
    <property type="evidence" value="ECO:0007005"/>
    <property type="project" value="PomBase"/>
</dbReference>
<dbReference type="GO" id="GO:0005794">
    <property type="term" value="C:Golgi apparatus"/>
    <property type="evidence" value="ECO:0007005"/>
    <property type="project" value="PomBase"/>
</dbReference>
<dbReference type="GO" id="GO:0000139">
    <property type="term" value="C:Golgi membrane"/>
    <property type="evidence" value="ECO:0000266"/>
    <property type="project" value="PomBase"/>
</dbReference>
<dbReference type="GO" id="GO:0031902">
    <property type="term" value="C:late endosome membrane"/>
    <property type="evidence" value="ECO:0000318"/>
    <property type="project" value="GO_Central"/>
</dbReference>
<dbReference type="GO" id="GO:0031201">
    <property type="term" value="C:SNARE complex"/>
    <property type="evidence" value="ECO:0000318"/>
    <property type="project" value="GO_Central"/>
</dbReference>
<dbReference type="GO" id="GO:0005774">
    <property type="term" value="C:vacuolar membrane"/>
    <property type="evidence" value="ECO:0000314"/>
    <property type="project" value="PomBase"/>
</dbReference>
<dbReference type="GO" id="GO:0005484">
    <property type="term" value="F:SNAP receptor activity"/>
    <property type="evidence" value="ECO:0000318"/>
    <property type="project" value="GO_Central"/>
</dbReference>
<dbReference type="GO" id="GO:0000149">
    <property type="term" value="F:SNARE binding"/>
    <property type="evidence" value="ECO:0000318"/>
    <property type="project" value="GO_Central"/>
</dbReference>
<dbReference type="GO" id="GO:0006896">
    <property type="term" value="P:Golgi to vacuole transport"/>
    <property type="evidence" value="ECO:0000318"/>
    <property type="project" value="GO_Central"/>
</dbReference>
<dbReference type="GO" id="GO:0006891">
    <property type="term" value="P:intra-Golgi vesicle-mediated transport"/>
    <property type="evidence" value="ECO:0000318"/>
    <property type="project" value="GO_Central"/>
</dbReference>
<dbReference type="GO" id="GO:0006886">
    <property type="term" value="P:intracellular protein transport"/>
    <property type="evidence" value="ECO:0000303"/>
    <property type="project" value="PomBase"/>
</dbReference>
<dbReference type="GO" id="GO:0045324">
    <property type="term" value="P:late endosome to vacuole transport"/>
    <property type="evidence" value="ECO:0000266"/>
    <property type="project" value="PomBase"/>
</dbReference>
<dbReference type="GO" id="GO:0016236">
    <property type="term" value="P:macroautophagy"/>
    <property type="evidence" value="ECO:0000318"/>
    <property type="project" value="GO_Central"/>
</dbReference>
<dbReference type="GO" id="GO:0042147">
    <property type="term" value="P:retrograde transport, endosome to Golgi"/>
    <property type="evidence" value="ECO:0000318"/>
    <property type="project" value="GO_Central"/>
</dbReference>
<dbReference type="GO" id="GO:0048278">
    <property type="term" value="P:vesicle docking"/>
    <property type="evidence" value="ECO:0000305"/>
    <property type="project" value="PomBase"/>
</dbReference>
<dbReference type="GO" id="GO:0048280">
    <property type="term" value="P:vesicle fusion with Golgi apparatus"/>
    <property type="evidence" value="ECO:0000318"/>
    <property type="project" value="GO_Central"/>
</dbReference>
<dbReference type="CDD" id="cd15862">
    <property type="entry name" value="SNARE_Vti1"/>
    <property type="match status" value="1"/>
</dbReference>
<dbReference type="FunFam" id="1.20.5.110:FF:000002">
    <property type="entry name" value="Vesicle transport through interaction with t-SNAREsB"/>
    <property type="match status" value="1"/>
</dbReference>
<dbReference type="Gene3D" id="1.20.5.110">
    <property type="match status" value="1"/>
</dbReference>
<dbReference type="Gene3D" id="1.20.58.400">
    <property type="entry name" value="t-snare proteins"/>
    <property type="match status" value="1"/>
</dbReference>
<dbReference type="InterPro" id="IPR010989">
    <property type="entry name" value="SNARE"/>
</dbReference>
<dbReference type="InterPro" id="IPR000727">
    <property type="entry name" value="T_SNARE_dom"/>
</dbReference>
<dbReference type="InterPro" id="IPR038407">
    <property type="entry name" value="v-SNARE_N_sf"/>
</dbReference>
<dbReference type="InterPro" id="IPR007705">
    <property type="entry name" value="Vesicle_trsprt_v-SNARE_N"/>
</dbReference>
<dbReference type="PANTHER" id="PTHR21230:SF26">
    <property type="entry name" value="VESICLE TRANSPORT THROUGH INTERACTION WITH T-SNARES HOMOLOG 1A"/>
    <property type="match status" value="1"/>
</dbReference>
<dbReference type="PANTHER" id="PTHR21230">
    <property type="entry name" value="VESICLE TRANSPORT V-SNARE PROTEIN VTI1-RELATED"/>
    <property type="match status" value="1"/>
</dbReference>
<dbReference type="Pfam" id="PF05008">
    <property type="entry name" value="V-SNARE"/>
    <property type="match status" value="1"/>
</dbReference>
<dbReference type="Pfam" id="PF12352">
    <property type="entry name" value="V-SNARE_C"/>
    <property type="match status" value="1"/>
</dbReference>
<dbReference type="SMART" id="SM00397">
    <property type="entry name" value="t_SNARE"/>
    <property type="match status" value="1"/>
</dbReference>
<dbReference type="SUPFAM" id="SSF58038">
    <property type="entry name" value="SNARE fusion complex"/>
    <property type="match status" value="1"/>
</dbReference>
<dbReference type="SUPFAM" id="SSF47661">
    <property type="entry name" value="t-snare proteins"/>
    <property type="match status" value="1"/>
</dbReference>
<comment type="function">
    <text evidence="1">V-SNARE that mediates vesicle transport pathways through interactions with t-SNAREs on the target membrane. These interactions are proposed to mediate aspects of the specificity of vesicle trafficking and to promote fusion of the lipid bilayers (By similarity).</text>
</comment>
<comment type="subcellular location">
    <subcellularLocation>
        <location evidence="1">Membrane</location>
        <topology evidence="1">Single-pass type IV membrane protein</topology>
    </subcellularLocation>
</comment>
<comment type="similarity">
    <text evidence="3">Belongs to the VTI1 family.</text>
</comment>
<feature type="chain" id="PRO_0000218231" description="Vesicle transport v-SNARE protein vti1">
    <location>
        <begin position="1"/>
        <end position="214"/>
    </location>
</feature>
<feature type="topological domain" description="Cytoplasmic" evidence="2">
    <location>
        <begin position="1"/>
        <end position="191"/>
    </location>
</feature>
<feature type="transmembrane region" description="Helical; Anchor for type IV membrane protein" evidence="2">
    <location>
        <begin position="192"/>
        <end position="212"/>
    </location>
</feature>
<feature type="topological domain" description="Vesicular" evidence="2">
    <location>
        <begin position="213"/>
        <end position="214"/>
    </location>
</feature>
<feature type="sequence conflict" description="In Ref. 1; BAA13778." evidence="3" ref="1">
    <original>Q</original>
    <variation>H</variation>
    <location>
        <position position="135"/>
    </location>
</feature>
<evidence type="ECO:0000250" key="1"/>
<evidence type="ECO:0000255" key="2"/>
<evidence type="ECO:0000305" key="3"/>
<proteinExistence type="evidence at transcript level"/>
<accession>P78768</accession>
<accession>O43039</accession>
<gene>
    <name type="primary">vti1</name>
    <name type="ORF">SPBC3B9.10</name>
</gene>
<reference key="1">
    <citation type="journal article" date="1997" name="DNA Res.">
        <title>Identification of open reading frames in Schizosaccharomyces pombe cDNAs.</title>
        <authorList>
            <person name="Yoshioka S."/>
            <person name="Kato K."/>
            <person name="Nakai K."/>
            <person name="Okayama H."/>
            <person name="Nojima H."/>
        </authorList>
    </citation>
    <scope>NUCLEOTIDE SEQUENCE [LARGE SCALE MRNA]</scope>
    <source>
        <strain>PR745</strain>
    </source>
</reference>
<reference key="2">
    <citation type="journal article" date="2002" name="Nature">
        <title>The genome sequence of Schizosaccharomyces pombe.</title>
        <authorList>
            <person name="Wood V."/>
            <person name="Gwilliam R."/>
            <person name="Rajandream M.A."/>
            <person name="Lyne M.H."/>
            <person name="Lyne R."/>
            <person name="Stewart A."/>
            <person name="Sgouros J.G."/>
            <person name="Peat N."/>
            <person name="Hayles J."/>
            <person name="Baker S.G."/>
            <person name="Basham D."/>
            <person name="Bowman S."/>
            <person name="Brooks K."/>
            <person name="Brown D."/>
            <person name="Brown S."/>
            <person name="Chillingworth T."/>
            <person name="Churcher C.M."/>
            <person name="Collins M."/>
            <person name="Connor R."/>
            <person name="Cronin A."/>
            <person name="Davis P."/>
            <person name="Feltwell T."/>
            <person name="Fraser A."/>
            <person name="Gentles S."/>
            <person name="Goble A."/>
            <person name="Hamlin N."/>
            <person name="Harris D.E."/>
            <person name="Hidalgo J."/>
            <person name="Hodgson G."/>
            <person name="Holroyd S."/>
            <person name="Hornsby T."/>
            <person name="Howarth S."/>
            <person name="Huckle E.J."/>
            <person name="Hunt S."/>
            <person name="Jagels K."/>
            <person name="James K.D."/>
            <person name="Jones L."/>
            <person name="Jones M."/>
            <person name="Leather S."/>
            <person name="McDonald S."/>
            <person name="McLean J."/>
            <person name="Mooney P."/>
            <person name="Moule S."/>
            <person name="Mungall K.L."/>
            <person name="Murphy L.D."/>
            <person name="Niblett D."/>
            <person name="Odell C."/>
            <person name="Oliver K."/>
            <person name="O'Neil S."/>
            <person name="Pearson D."/>
            <person name="Quail M.A."/>
            <person name="Rabbinowitsch E."/>
            <person name="Rutherford K.M."/>
            <person name="Rutter S."/>
            <person name="Saunders D."/>
            <person name="Seeger K."/>
            <person name="Sharp S."/>
            <person name="Skelton J."/>
            <person name="Simmonds M.N."/>
            <person name="Squares R."/>
            <person name="Squares S."/>
            <person name="Stevens K."/>
            <person name="Taylor K."/>
            <person name="Taylor R.G."/>
            <person name="Tivey A."/>
            <person name="Walsh S.V."/>
            <person name="Warren T."/>
            <person name="Whitehead S."/>
            <person name="Woodward J.R."/>
            <person name="Volckaert G."/>
            <person name="Aert R."/>
            <person name="Robben J."/>
            <person name="Grymonprez B."/>
            <person name="Weltjens I."/>
            <person name="Vanstreels E."/>
            <person name="Rieger M."/>
            <person name="Schaefer M."/>
            <person name="Mueller-Auer S."/>
            <person name="Gabel C."/>
            <person name="Fuchs M."/>
            <person name="Duesterhoeft A."/>
            <person name="Fritzc C."/>
            <person name="Holzer E."/>
            <person name="Moestl D."/>
            <person name="Hilbert H."/>
            <person name="Borzym K."/>
            <person name="Langer I."/>
            <person name="Beck A."/>
            <person name="Lehrach H."/>
            <person name="Reinhardt R."/>
            <person name="Pohl T.M."/>
            <person name="Eger P."/>
            <person name="Zimmermann W."/>
            <person name="Wedler H."/>
            <person name="Wambutt R."/>
            <person name="Purnelle B."/>
            <person name="Goffeau A."/>
            <person name="Cadieu E."/>
            <person name="Dreano S."/>
            <person name="Gloux S."/>
            <person name="Lelaure V."/>
            <person name="Mottier S."/>
            <person name="Galibert F."/>
            <person name="Aves S.J."/>
            <person name="Xiang Z."/>
            <person name="Hunt C."/>
            <person name="Moore K."/>
            <person name="Hurst S.M."/>
            <person name="Lucas M."/>
            <person name="Rochet M."/>
            <person name="Gaillardin C."/>
            <person name="Tallada V.A."/>
            <person name="Garzon A."/>
            <person name="Thode G."/>
            <person name="Daga R.R."/>
            <person name="Cruzado L."/>
            <person name="Jimenez J."/>
            <person name="Sanchez M."/>
            <person name="del Rey F."/>
            <person name="Benito J."/>
            <person name="Dominguez A."/>
            <person name="Revuelta J.L."/>
            <person name="Moreno S."/>
            <person name="Armstrong J."/>
            <person name="Forsburg S.L."/>
            <person name="Cerutti L."/>
            <person name="Lowe T."/>
            <person name="McCombie W.R."/>
            <person name="Paulsen I."/>
            <person name="Potashkin J."/>
            <person name="Shpakovski G.V."/>
            <person name="Ussery D."/>
            <person name="Barrell B.G."/>
            <person name="Nurse P."/>
        </authorList>
    </citation>
    <scope>NUCLEOTIDE SEQUENCE [LARGE SCALE GENOMIC DNA]</scope>
    <source>
        <strain>972 / ATCC 24843</strain>
    </source>
</reference>
<protein>
    <recommendedName>
        <fullName>Vesicle transport v-SNARE protein vti1</fullName>
    </recommendedName>
</protein>